<feature type="chain" id="PRO_0000293283" description="Small ribosomal subunit protein uS4">
    <location>
        <begin position="1"/>
        <end position="206"/>
    </location>
</feature>
<feature type="domain" description="S4 RNA-binding" evidence="1">
    <location>
        <begin position="96"/>
        <end position="158"/>
    </location>
</feature>
<dbReference type="EMBL" id="AM286280">
    <property type="protein sequence ID" value="CAL08365.1"/>
    <property type="molecule type" value="Genomic_DNA"/>
</dbReference>
<dbReference type="RefSeq" id="WP_003014378.1">
    <property type="nucleotide sequence ID" value="NC_008245.1"/>
</dbReference>
<dbReference type="SMR" id="Q14J96"/>
<dbReference type="GeneID" id="75264237"/>
<dbReference type="KEGG" id="ftf:FTF0349"/>
<dbReference type="HOGENOM" id="CLU_092403_0_2_6"/>
<dbReference type="GO" id="GO:0015935">
    <property type="term" value="C:small ribosomal subunit"/>
    <property type="evidence" value="ECO:0007669"/>
    <property type="project" value="InterPro"/>
</dbReference>
<dbReference type="GO" id="GO:0019843">
    <property type="term" value="F:rRNA binding"/>
    <property type="evidence" value="ECO:0007669"/>
    <property type="project" value="UniProtKB-UniRule"/>
</dbReference>
<dbReference type="GO" id="GO:0003735">
    <property type="term" value="F:structural constituent of ribosome"/>
    <property type="evidence" value="ECO:0007669"/>
    <property type="project" value="InterPro"/>
</dbReference>
<dbReference type="GO" id="GO:0042274">
    <property type="term" value="P:ribosomal small subunit biogenesis"/>
    <property type="evidence" value="ECO:0007669"/>
    <property type="project" value="TreeGrafter"/>
</dbReference>
<dbReference type="GO" id="GO:0006412">
    <property type="term" value="P:translation"/>
    <property type="evidence" value="ECO:0007669"/>
    <property type="project" value="UniProtKB-UniRule"/>
</dbReference>
<dbReference type="CDD" id="cd00165">
    <property type="entry name" value="S4"/>
    <property type="match status" value="1"/>
</dbReference>
<dbReference type="FunFam" id="1.10.1050.10:FF:000001">
    <property type="entry name" value="30S ribosomal protein S4"/>
    <property type="match status" value="1"/>
</dbReference>
<dbReference type="FunFam" id="3.10.290.10:FF:000001">
    <property type="entry name" value="30S ribosomal protein S4"/>
    <property type="match status" value="1"/>
</dbReference>
<dbReference type="Gene3D" id="1.10.1050.10">
    <property type="entry name" value="Ribosomal Protein S4 Delta 41, Chain A, domain 1"/>
    <property type="match status" value="1"/>
</dbReference>
<dbReference type="Gene3D" id="3.10.290.10">
    <property type="entry name" value="RNA-binding S4 domain"/>
    <property type="match status" value="1"/>
</dbReference>
<dbReference type="HAMAP" id="MF_01306_B">
    <property type="entry name" value="Ribosomal_uS4_B"/>
    <property type="match status" value="1"/>
</dbReference>
<dbReference type="InterPro" id="IPR022801">
    <property type="entry name" value="Ribosomal_uS4"/>
</dbReference>
<dbReference type="InterPro" id="IPR005709">
    <property type="entry name" value="Ribosomal_uS4_bac-type"/>
</dbReference>
<dbReference type="InterPro" id="IPR018079">
    <property type="entry name" value="Ribosomal_uS4_CS"/>
</dbReference>
<dbReference type="InterPro" id="IPR001912">
    <property type="entry name" value="Ribosomal_uS4_N"/>
</dbReference>
<dbReference type="InterPro" id="IPR002942">
    <property type="entry name" value="S4_RNA-bd"/>
</dbReference>
<dbReference type="InterPro" id="IPR036986">
    <property type="entry name" value="S4_RNA-bd_sf"/>
</dbReference>
<dbReference type="NCBIfam" id="NF003717">
    <property type="entry name" value="PRK05327.1"/>
    <property type="match status" value="1"/>
</dbReference>
<dbReference type="NCBIfam" id="TIGR01017">
    <property type="entry name" value="rpsD_bact"/>
    <property type="match status" value="1"/>
</dbReference>
<dbReference type="PANTHER" id="PTHR11831">
    <property type="entry name" value="30S 40S RIBOSOMAL PROTEIN"/>
    <property type="match status" value="1"/>
</dbReference>
<dbReference type="PANTHER" id="PTHR11831:SF4">
    <property type="entry name" value="SMALL RIBOSOMAL SUBUNIT PROTEIN US4M"/>
    <property type="match status" value="1"/>
</dbReference>
<dbReference type="Pfam" id="PF00163">
    <property type="entry name" value="Ribosomal_S4"/>
    <property type="match status" value="1"/>
</dbReference>
<dbReference type="Pfam" id="PF01479">
    <property type="entry name" value="S4"/>
    <property type="match status" value="1"/>
</dbReference>
<dbReference type="SMART" id="SM01390">
    <property type="entry name" value="Ribosomal_S4"/>
    <property type="match status" value="1"/>
</dbReference>
<dbReference type="SMART" id="SM00363">
    <property type="entry name" value="S4"/>
    <property type="match status" value="1"/>
</dbReference>
<dbReference type="SUPFAM" id="SSF55174">
    <property type="entry name" value="Alpha-L RNA-binding motif"/>
    <property type="match status" value="1"/>
</dbReference>
<dbReference type="PROSITE" id="PS00632">
    <property type="entry name" value="RIBOSOMAL_S4"/>
    <property type="match status" value="1"/>
</dbReference>
<dbReference type="PROSITE" id="PS50889">
    <property type="entry name" value="S4"/>
    <property type="match status" value="1"/>
</dbReference>
<accession>Q14J96</accession>
<reference key="1">
    <citation type="journal article" date="2007" name="PLoS ONE">
        <title>Genome sequencing shows that European isolates of Francisella tularensis subspecies tularensis are almost identical to US laboratory strain Schu S4.</title>
        <authorList>
            <person name="Chaudhuri R.R."/>
            <person name="Ren C.-P."/>
            <person name="Desmond L."/>
            <person name="Vincent G.A."/>
            <person name="Silman N.J."/>
            <person name="Brehm J.K."/>
            <person name="Elmore M.J."/>
            <person name="Hudson M.J."/>
            <person name="Forsman M."/>
            <person name="Isherwood K.E."/>
            <person name="Gurycova D."/>
            <person name="Minton N.P."/>
            <person name="Titball R.W."/>
            <person name="Pallen M.J."/>
            <person name="Vipond R."/>
        </authorList>
    </citation>
    <scope>NUCLEOTIDE SEQUENCE [LARGE SCALE GENOMIC DNA]</scope>
    <source>
        <strain>FSC 198</strain>
    </source>
</reference>
<proteinExistence type="inferred from homology"/>
<evidence type="ECO:0000255" key="1">
    <source>
        <dbReference type="HAMAP-Rule" id="MF_01306"/>
    </source>
</evidence>
<evidence type="ECO:0000305" key="2"/>
<sequence length="206" mass="23237">MARYLGPKCKLSRREGTDLFLKSGVKANDEKCKMNTAPGQHGARRARLSDYGLQLREKQKVRRMYGILEGQFKKYYVEASRRKGNTGATLLELLESRLDNVVYRMGFAATRAEARQLVVHKGIMVNGHTCNVPSAQVKAGDVVAVREKAKKQLRIQNAVELAKHRKELSWIDVNTDSLEGTMKSSPDRSELSADINEQLIIELYSK</sequence>
<comment type="function">
    <text evidence="1">One of the primary rRNA binding proteins, it binds directly to 16S rRNA where it nucleates assembly of the body of the 30S subunit.</text>
</comment>
<comment type="function">
    <text evidence="1">With S5 and S12 plays an important role in translational accuracy.</text>
</comment>
<comment type="subunit">
    <text evidence="1">Part of the 30S ribosomal subunit. Contacts protein S5. The interaction surface between S4 and S5 is involved in control of translational fidelity.</text>
</comment>
<comment type="similarity">
    <text evidence="1">Belongs to the universal ribosomal protein uS4 family.</text>
</comment>
<gene>
    <name evidence="1" type="primary">rpsD</name>
    <name type="ordered locus">FTF0349</name>
</gene>
<keyword id="KW-0687">Ribonucleoprotein</keyword>
<keyword id="KW-0689">Ribosomal protein</keyword>
<keyword id="KW-0694">RNA-binding</keyword>
<keyword id="KW-0699">rRNA-binding</keyword>
<protein>
    <recommendedName>
        <fullName evidence="1">Small ribosomal subunit protein uS4</fullName>
    </recommendedName>
    <alternativeName>
        <fullName evidence="2">30S ribosomal protein S4</fullName>
    </alternativeName>
</protein>
<organism>
    <name type="scientific">Francisella tularensis subsp. tularensis (strain FSC 198)</name>
    <dbReference type="NCBI Taxonomy" id="393115"/>
    <lineage>
        <taxon>Bacteria</taxon>
        <taxon>Pseudomonadati</taxon>
        <taxon>Pseudomonadota</taxon>
        <taxon>Gammaproteobacteria</taxon>
        <taxon>Thiotrichales</taxon>
        <taxon>Francisellaceae</taxon>
        <taxon>Francisella</taxon>
    </lineage>
</organism>
<name>RS4_FRAT1</name>